<name>CYB_AMMHA</name>
<reference key="1">
    <citation type="submission" date="1999-06" db="EMBL/GenBank/DDBJ databases">
        <title>A molecular phylogeny of ground squirrels and prairie dogs.</title>
        <authorList>
            <person name="Harrison R.G."/>
            <person name="Sherman P.W."/>
            <person name="Yensen E."/>
            <person name="Hoffmann R.S."/>
            <person name="Bogdanowicz S.M."/>
        </authorList>
    </citation>
    <scope>NUCLEOTIDE SEQUENCE [GENOMIC DNA]</scope>
    <source>
        <strain>Isolate S78</strain>
    </source>
</reference>
<feature type="chain" id="PRO_0000060574" description="Cytochrome b">
    <location>
        <begin position="1"/>
        <end position="379"/>
    </location>
</feature>
<feature type="transmembrane region" description="Helical" evidence="2">
    <location>
        <begin position="33"/>
        <end position="53"/>
    </location>
</feature>
<feature type="transmembrane region" description="Helical" evidence="2">
    <location>
        <begin position="77"/>
        <end position="98"/>
    </location>
</feature>
<feature type="transmembrane region" description="Helical" evidence="2">
    <location>
        <begin position="113"/>
        <end position="133"/>
    </location>
</feature>
<feature type="transmembrane region" description="Helical" evidence="2">
    <location>
        <begin position="178"/>
        <end position="198"/>
    </location>
</feature>
<feature type="transmembrane region" description="Helical" evidence="2">
    <location>
        <begin position="226"/>
        <end position="246"/>
    </location>
</feature>
<feature type="transmembrane region" description="Helical" evidence="2">
    <location>
        <begin position="288"/>
        <end position="308"/>
    </location>
</feature>
<feature type="transmembrane region" description="Helical" evidence="2">
    <location>
        <begin position="320"/>
        <end position="340"/>
    </location>
</feature>
<feature type="transmembrane region" description="Helical" evidence="2">
    <location>
        <begin position="347"/>
        <end position="367"/>
    </location>
</feature>
<feature type="binding site" description="axial binding residue" evidence="2">
    <location>
        <position position="83"/>
    </location>
    <ligand>
        <name>heme b</name>
        <dbReference type="ChEBI" id="CHEBI:60344"/>
        <label>b562</label>
    </ligand>
    <ligandPart>
        <name>Fe</name>
        <dbReference type="ChEBI" id="CHEBI:18248"/>
    </ligandPart>
</feature>
<feature type="binding site" description="axial binding residue" evidence="2">
    <location>
        <position position="97"/>
    </location>
    <ligand>
        <name>heme b</name>
        <dbReference type="ChEBI" id="CHEBI:60344"/>
        <label>b566</label>
    </ligand>
    <ligandPart>
        <name>Fe</name>
        <dbReference type="ChEBI" id="CHEBI:18248"/>
    </ligandPart>
</feature>
<feature type="binding site" description="axial binding residue" evidence="2">
    <location>
        <position position="182"/>
    </location>
    <ligand>
        <name>heme b</name>
        <dbReference type="ChEBI" id="CHEBI:60344"/>
        <label>b562</label>
    </ligand>
    <ligandPart>
        <name>Fe</name>
        <dbReference type="ChEBI" id="CHEBI:18248"/>
    </ligandPart>
</feature>
<feature type="binding site" description="axial binding residue" evidence="2">
    <location>
        <position position="196"/>
    </location>
    <ligand>
        <name>heme b</name>
        <dbReference type="ChEBI" id="CHEBI:60344"/>
        <label>b566</label>
    </ligand>
    <ligandPart>
        <name>Fe</name>
        <dbReference type="ChEBI" id="CHEBI:18248"/>
    </ligandPart>
</feature>
<feature type="binding site" evidence="2">
    <location>
        <position position="201"/>
    </location>
    <ligand>
        <name>a ubiquinone</name>
        <dbReference type="ChEBI" id="CHEBI:16389"/>
    </ligand>
</feature>
<geneLocation type="mitochondrion"/>
<sequence>MTNIRKTHPLIKIVNHSFIDLPTPSNISAWWNFGSLLGLCLAIQILTGLFLAMHYTSDTMTAFSSVTHICRDVNYGWLIRYMHANGASMFFICLFLHVGRGLYYGSYTYFETWNIGVILLFAVMATAFMGYVLPWGQMSFWGATVITNLLSAIPYIGTTLVEWIWGGFSVDKATLTRFFAFHFILPFIIAALVMVHLLFLHETGSNNPSGLISDSDKIPFHPYFTIKDILGVLLLILALMILVLFSPDLLGDPDNYTPANPLNTPPHIKPEWYFLFAYAILRSIPNKLGGVLALVFSILILMLFPLLHMSKQRSMIFRPLSQCMFWILVADLFTLTWIGGQPVEYPFIIIGQLASVLYFSIILLIMPATSLIENKLLKW</sequence>
<comment type="function">
    <text evidence="2">Component of the ubiquinol-cytochrome c reductase complex (complex III or cytochrome b-c1 complex) that is part of the mitochondrial respiratory chain. The b-c1 complex mediates electron transfer from ubiquinol to cytochrome c. Contributes to the generation of a proton gradient across the mitochondrial membrane that is then used for ATP synthesis.</text>
</comment>
<comment type="cofactor">
    <cofactor evidence="2">
        <name>heme b</name>
        <dbReference type="ChEBI" id="CHEBI:60344"/>
    </cofactor>
    <text evidence="2">Binds 2 heme b groups non-covalently.</text>
</comment>
<comment type="subunit">
    <text evidence="2">The cytochrome bc1 complex contains 11 subunits: 3 respiratory subunits (MT-CYB, CYC1 and UQCRFS1), 2 core proteins (UQCRC1 and UQCRC2) and 6 low-molecular weight proteins (UQCRH/QCR6, UQCRB/QCR7, UQCRQ/QCR8, UQCR10/QCR9, UQCR11/QCR10 and a cleavage product of UQCRFS1). This cytochrome bc1 complex then forms a dimer.</text>
</comment>
<comment type="subcellular location">
    <subcellularLocation>
        <location evidence="2">Mitochondrion inner membrane</location>
        <topology evidence="2">Multi-pass membrane protein</topology>
    </subcellularLocation>
</comment>
<comment type="miscellaneous">
    <text evidence="1">Heme 1 (or BL or b562) is low-potential and absorbs at about 562 nm, and heme 2 (or BH or b566) is high-potential and absorbs at about 566 nm.</text>
</comment>
<comment type="similarity">
    <text evidence="3 4">Belongs to the cytochrome b family.</text>
</comment>
<comment type="caution">
    <text evidence="2">The full-length protein contains only eight transmembrane helices, not nine as predicted by bioinformatics tools.</text>
</comment>
<accession>Q9TF30</accession>
<dbReference type="EMBL" id="AF157926">
    <property type="protein sequence ID" value="AAD50210.1"/>
    <property type="molecule type" value="Genomic_DNA"/>
</dbReference>
<dbReference type="SMR" id="Q9TF30"/>
<dbReference type="GO" id="GO:0005743">
    <property type="term" value="C:mitochondrial inner membrane"/>
    <property type="evidence" value="ECO:0007669"/>
    <property type="project" value="UniProtKB-SubCell"/>
</dbReference>
<dbReference type="GO" id="GO:0045275">
    <property type="term" value="C:respiratory chain complex III"/>
    <property type="evidence" value="ECO:0007669"/>
    <property type="project" value="InterPro"/>
</dbReference>
<dbReference type="GO" id="GO:0046872">
    <property type="term" value="F:metal ion binding"/>
    <property type="evidence" value="ECO:0007669"/>
    <property type="project" value="UniProtKB-KW"/>
</dbReference>
<dbReference type="GO" id="GO:0008121">
    <property type="term" value="F:ubiquinol-cytochrome-c reductase activity"/>
    <property type="evidence" value="ECO:0007669"/>
    <property type="project" value="InterPro"/>
</dbReference>
<dbReference type="GO" id="GO:0006122">
    <property type="term" value="P:mitochondrial electron transport, ubiquinol to cytochrome c"/>
    <property type="evidence" value="ECO:0007669"/>
    <property type="project" value="TreeGrafter"/>
</dbReference>
<dbReference type="CDD" id="cd00290">
    <property type="entry name" value="cytochrome_b_C"/>
    <property type="match status" value="1"/>
</dbReference>
<dbReference type="CDD" id="cd00284">
    <property type="entry name" value="Cytochrome_b_N"/>
    <property type="match status" value="1"/>
</dbReference>
<dbReference type="FunFam" id="1.20.810.10:FF:000002">
    <property type="entry name" value="Cytochrome b"/>
    <property type="match status" value="1"/>
</dbReference>
<dbReference type="Gene3D" id="1.20.810.10">
    <property type="entry name" value="Cytochrome Bc1 Complex, Chain C"/>
    <property type="match status" value="1"/>
</dbReference>
<dbReference type="InterPro" id="IPR005798">
    <property type="entry name" value="Cyt_b/b6_C"/>
</dbReference>
<dbReference type="InterPro" id="IPR036150">
    <property type="entry name" value="Cyt_b/b6_C_sf"/>
</dbReference>
<dbReference type="InterPro" id="IPR005797">
    <property type="entry name" value="Cyt_b/b6_N"/>
</dbReference>
<dbReference type="InterPro" id="IPR027387">
    <property type="entry name" value="Cytb/b6-like_sf"/>
</dbReference>
<dbReference type="InterPro" id="IPR030689">
    <property type="entry name" value="Cytochrome_b"/>
</dbReference>
<dbReference type="InterPro" id="IPR048260">
    <property type="entry name" value="Cytochrome_b_C_euk/bac"/>
</dbReference>
<dbReference type="InterPro" id="IPR048259">
    <property type="entry name" value="Cytochrome_b_N_euk/bac"/>
</dbReference>
<dbReference type="InterPro" id="IPR016174">
    <property type="entry name" value="Di-haem_cyt_TM"/>
</dbReference>
<dbReference type="PANTHER" id="PTHR19271">
    <property type="entry name" value="CYTOCHROME B"/>
    <property type="match status" value="1"/>
</dbReference>
<dbReference type="PANTHER" id="PTHR19271:SF16">
    <property type="entry name" value="CYTOCHROME B"/>
    <property type="match status" value="1"/>
</dbReference>
<dbReference type="Pfam" id="PF00032">
    <property type="entry name" value="Cytochrom_B_C"/>
    <property type="match status" value="1"/>
</dbReference>
<dbReference type="Pfam" id="PF00033">
    <property type="entry name" value="Cytochrome_B"/>
    <property type="match status" value="1"/>
</dbReference>
<dbReference type="PIRSF" id="PIRSF038885">
    <property type="entry name" value="COB"/>
    <property type="match status" value="1"/>
</dbReference>
<dbReference type="SUPFAM" id="SSF81648">
    <property type="entry name" value="a domain/subunit of cytochrome bc1 complex (Ubiquinol-cytochrome c reductase)"/>
    <property type="match status" value="1"/>
</dbReference>
<dbReference type="SUPFAM" id="SSF81342">
    <property type="entry name" value="Transmembrane di-heme cytochromes"/>
    <property type="match status" value="1"/>
</dbReference>
<dbReference type="PROSITE" id="PS51003">
    <property type="entry name" value="CYTB_CTER"/>
    <property type="match status" value="1"/>
</dbReference>
<dbReference type="PROSITE" id="PS51002">
    <property type="entry name" value="CYTB_NTER"/>
    <property type="match status" value="1"/>
</dbReference>
<keyword id="KW-0249">Electron transport</keyword>
<keyword id="KW-0349">Heme</keyword>
<keyword id="KW-0408">Iron</keyword>
<keyword id="KW-0472">Membrane</keyword>
<keyword id="KW-0479">Metal-binding</keyword>
<keyword id="KW-0496">Mitochondrion</keyword>
<keyword id="KW-0999">Mitochondrion inner membrane</keyword>
<keyword id="KW-0679">Respiratory chain</keyword>
<keyword id="KW-0812">Transmembrane</keyword>
<keyword id="KW-1133">Transmembrane helix</keyword>
<keyword id="KW-0813">Transport</keyword>
<keyword id="KW-0830">Ubiquinone</keyword>
<evidence type="ECO:0000250" key="1"/>
<evidence type="ECO:0000250" key="2">
    <source>
        <dbReference type="UniProtKB" id="P00157"/>
    </source>
</evidence>
<evidence type="ECO:0000255" key="3">
    <source>
        <dbReference type="PROSITE-ProRule" id="PRU00967"/>
    </source>
</evidence>
<evidence type="ECO:0000255" key="4">
    <source>
        <dbReference type="PROSITE-ProRule" id="PRU00968"/>
    </source>
</evidence>
<gene>
    <name type="primary">MT-CYB</name>
    <name type="synonym">COB</name>
    <name type="synonym">CYTB</name>
    <name type="synonym">MTCYB</name>
</gene>
<organism>
    <name type="scientific">Ammospermophilus harrisii</name>
    <name type="common">Harris' antelope squirrel</name>
    <dbReference type="NCBI Taxonomy" id="45487"/>
    <lineage>
        <taxon>Eukaryota</taxon>
        <taxon>Metazoa</taxon>
        <taxon>Chordata</taxon>
        <taxon>Craniata</taxon>
        <taxon>Vertebrata</taxon>
        <taxon>Euteleostomi</taxon>
        <taxon>Mammalia</taxon>
        <taxon>Eutheria</taxon>
        <taxon>Euarchontoglires</taxon>
        <taxon>Glires</taxon>
        <taxon>Rodentia</taxon>
        <taxon>Sciuromorpha</taxon>
        <taxon>Sciuridae</taxon>
        <taxon>Xerinae</taxon>
        <taxon>Marmotini</taxon>
        <taxon>Ammospermophilus</taxon>
    </lineage>
</organism>
<proteinExistence type="inferred from homology"/>
<protein>
    <recommendedName>
        <fullName>Cytochrome b</fullName>
    </recommendedName>
    <alternativeName>
        <fullName>Complex III subunit 3</fullName>
    </alternativeName>
    <alternativeName>
        <fullName>Complex III subunit III</fullName>
    </alternativeName>
    <alternativeName>
        <fullName>Cytochrome b-c1 complex subunit 3</fullName>
    </alternativeName>
    <alternativeName>
        <fullName>Ubiquinol-cytochrome-c reductase complex cytochrome b subunit</fullName>
    </alternativeName>
</protein>